<evidence type="ECO:0000255" key="1"/>
<evidence type="ECO:0000256" key="2">
    <source>
        <dbReference type="SAM" id="MobiDB-lite"/>
    </source>
</evidence>
<evidence type="ECO:0000269" key="3">
    <source>
    </source>
</evidence>
<evidence type="ECO:0000269" key="4">
    <source>
    </source>
</evidence>
<evidence type="ECO:0000269" key="5">
    <source>
    </source>
</evidence>
<evidence type="ECO:0000303" key="6">
    <source>
    </source>
</evidence>
<evidence type="ECO:0000305" key="7"/>
<evidence type="ECO:0007744" key="8">
    <source>
    </source>
</evidence>
<reference key="1">
    <citation type="journal article" date="1995" name="Yeast">
        <title>Sequence analysis of a 5.6 kb fragment of chromosome II from Saccharomyces cerevisiae reveals two new open reading frames next to CDC28.</title>
        <authorList>
            <person name="Baur S."/>
            <person name="Becker J."/>
            <person name="Li Z."/>
            <person name="Niegemann E."/>
            <person name="Wehner E."/>
            <person name="Wolter R."/>
            <person name="Brendel M."/>
        </authorList>
    </citation>
    <scope>NUCLEOTIDE SEQUENCE [GENOMIC DNA]</scope>
</reference>
<reference key="2">
    <citation type="journal article" date="1994" name="EMBO J.">
        <title>Complete DNA sequence of yeast chromosome II.</title>
        <authorList>
            <person name="Feldmann H."/>
            <person name="Aigle M."/>
            <person name="Aljinovic G."/>
            <person name="Andre B."/>
            <person name="Baclet M.C."/>
            <person name="Barthe C."/>
            <person name="Baur A."/>
            <person name="Becam A.-M."/>
            <person name="Biteau N."/>
            <person name="Boles E."/>
            <person name="Brandt T."/>
            <person name="Brendel M."/>
            <person name="Brueckner M."/>
            <person name="Bussereau F."/>
            <person name="Christiansen C."/>
            <person name="Contreras R."/>
            <person name="Crouzet M."/>
            <person name="Cziepluch C."/>
            <person name="Demolis N."/>
            <person name="Delaveau T."/>
            <person name="Doignon F."/>
            <person name="Domdey H."/>
            <person name="Duesterhus S."/>
            <person name="Dubois E."/>
            <person name="Dujon B."/>
            <person name="El Bakkoury M."/>
            <person name="Entian K.-D."/>
            <person name="Feuermann M."/>
            <person name="Fiers W."/>
            <person name="Fobo G.M."/>
            <person name="Fritz C."/>
            <person name="Gassenhuber J."/>
            <person name="Glansdorff N."/>
            <person name="Goffeau A."/>
            <person name="Grivell L.A."/>
            <person name="de Haan M."/>
            <person name="Hein C."/>
            <person name="Herbert C.J."/>
            <person name="Hollenberg C.P."/>
            <person name="Holmstroem K."/>
            <person name="Jacq C."/>
            <person name="Jacquet M."/>
            <person name="Jauniaux J.-C."/>
            <person name="Jonniaux J.-L."/>
            <person name="Kallesoee T."/>
            <person name="Kiesau P."/>
            <person name="Kirchrath L."/>
            <person name="Koetter P."/>
            <person name="Korol S."/>
            <person name="Liebl S."/>
            <person name="Logghe M."/>
            <person name="Lohan A.J.E."/>
            <person name="Louis E.J."/>
            <person name="Li Z.Y."/>
            <person name="Maat M.J."/>
            <person name="Mallet L."/>
            <person name="Mannhaupt G."/>
            <person name="Messenguy F."/>
            <person name="Miosga T."/>
            <person name="Molemans F."/>
            <person name="Mueller S."/>
            <person name="Nasr F."/>
            <person name="Obermaier B."/>
            <person name="Perea J."/>
            <person name="Pierard A."/>
            <person name="Piravandi E."/>
            <person name="Pohl F.M."/>
            <person name="Pohl T.M."/>
            <person name="Potier S."/>
            <person name="Proft M."/>
            <person name="Purnelle B."/>
            <person name="Ramezani Rad M."/>
            <person name="Rieger M."/>
            <person name="Rose M."/>
            <person name="Schaaff-Gerstenschlaeger I."/>
            <person name="Scherens B."/>
            <person name="Schwarzlose C."/>
            <person name="Skala J."/>
            <person name="Slonimski P.P."/>
            <person name="Smits P.H.M."/>
            <person name="Souciet J.-L."/>
            <person name="Steensma H.Y."/>
            <person name="Stucka R."/>
            <person name="Urrestarazu L.A."/>
            <person name="van der Aart Q.J.M."/>
            <person name="Van Dyck L."/>
            <person name="Vassarotti A."/>
            <person name="Vetter I."/>
            <person name="Vierendeels F."/>
            <person name="Vissers S."/>
            <person name="Wagner G."/>
            <person name="de Wergifosse P."/>
            <person name="Wolfe K.H."/>
            <person name="Zagulski M."/>
            <person name="Zimmermann F.K."/>
            <person name="Mewes H.-W."/>
            <person name="Kleine K."/>
        </authorList>
    </citation>
    <scope>NUCLEOTIDE SEQUENCE [LARGE SCALE GENOMIC DNA]</scope>
    <source>
        <strain>ATCC 204508 / S288c</strain>
    </source>
</reference>
<reference key="3">
    <citation type="journal article" date="2014" name="G3 (Bethesda)">
        <title>The reference genome sequence of Saccharomyces cerevisiae: Then and now.</title>
        <authorList>
            <person name="Engel S.R."/>
            <person name="Dietrich F.S."/>
            <person name="Fisk D.G."/>
            <person name="Binkley G."/>
            <person name="Balakrishnan R."/>
            <person name="Costanzo M.C."/>
            <person name="Dwight S.S."/>
            <person name="Hitz B.C."/>
            <person name="Karra K."/>
            <person name="Nash R.S."/>
            <person name="Weng S."/>
            <person name="Wong E.D."/>
            <person name="Lloyd P."/>
            <person name="Skrzypek M.S."/>
            <person name="Miyasato S.R."/>
            <person name="Simison M."/>
            <person name="Cherry J.M."/>
        </authorList>
    </citation>
    <scope>GENOME REANNOTATION</scope>
    <source>
        <strain>ATCC 204508 / S288c</strain>
    </source>
</reference>
<reference key="4">
    <citation type="journal article" date="2007" name="Genome Res.">
        <title>Approaching a complete repository of sequence-verified protein-encoding clones for Saccharomyces cerevisiae.</title>
        <authorList>
            <person name="Hu Y."/>
            <person name="Rolfs A."/>
            <person name="Bhullar B."/>
            <person name="Murthy T.V.S."/>
            <person name="Zhu C."/>
            <person name="Berger M.F."/>
            <person name="Camargo A.A."/>
            <person name="Kelley F."/>
            <person name="McCarron S."/>
            <person name="Jepson D."/>
            <person name="Richardson A."/>
            <person name="Raphael J."/>
            <person name="Moreira D."/>
            <person name="Taycher E."/>
            <person name="Zuo D."/>
            <person name="Mohr S."/>
            <person name="Kane M.F."/>
            <person name="Williamson J."/>
            <person name="Simpson A.J.G."/>
            <person name="Bulyk M.L."/>
            <person name="Harlow E."/>
            <person name="Marsischky G."/>
            <person name="Kolodner R.D."/>
            <person name="LaBaer J."/>
        </authorList>
    </citation>
    <scope>NUCLEOTIDE SEQUENCE [GENOMIC DNA]</scope>
    <source>
        <strain>ATCC 204508 / S288c</strain>
    </source>
</reference>
<reference key="5">
    <citation type="journal article" date="2003" name="J. Biol. Chem.">
        <title>Csg1p and newly identified Csh1p function in mannosylinositol phosphorylceramide synthesis by interacting with Csg2p.</title>
        <authorList>
            <person name="Uemura S."/>
            <person name="Kihara A."/>
            <person name="Inokuchi J."/>
            <person name="Igarashi Y."/>
        </authorList>
    </citation>
    <scope>FUNCTION</scope>
    <scope>SUBUNIT</scope>
    <scope>DISRUPTION PHENOTYPE</scope>
    <scope>CATALYTIC ACTIVITY</scope>
</reference>
<reference key="6">
    <citation type="journal article" date="2003" name="Nature">
        <title>Global analysis of protein localization in budding yeast.</title>
        <authorList>
            <person name="Huh W.-K."/>
            <person name="Falvo J.V."/>
            <person name="Gerke L.C."/>
            <person name="Carroll A.S."/>
            <person name="Howson R.W."/>
            <person name="Weissman J.S."/>
            <person name="O'Shea E.K."/>
        </authorList>
    </citation>
    <scope>SUBCELLULAR LOCATION [LARGE SCALE ANALYSIS]</scope>
</reference>
<reference key="7">
    <citation type="journal article" date="2003" name="Nature">
        <title>Global analysis of protein expression in yeast.</title>
        <authorList>
            <person name="Ghaemmaghami S."/>
            <person name="Huh W.-K."/>
            <person name="Bower K."/>
            <person name="Howson R.W."/>
            <person name="Belle A."/>
            <person name="Dephoure N."/>
            <person name="O'Shea E.K."/>
            <person name="Weissman J.S."/>
        </authorList>
    </citation>
    <scope>LEVEL OF PROTEIN EXPRESSION [LARGE SCALE ANALYSIS]</scope>
</reference>
<reference key="8">
    <citation type="journal article" date="2007" name="J. Proteome Res.">
        <title>Large-scale phosphorylation analysis of alpha-factor-arrested Saccharomyces cerevisiae.</title>
        <authorList>
            <person name="Li X."/>
            <person name="Gerber S.A."/>
            <person name="Rudner A.D."/>
            <person name="Beausoleil S.A."/>
            <person name="Haas W."/>
            <person name="Villen J."/>
            <person name="Elias J.E."/>
            <person name="Gygi S.P."/>
        </authorList>
    </citation>
    <scope>PHOSPHORYLATION [LARGE SCALE ANALYSIS] AT SER-354</scope>
    <scope>IDENTIFICATION BY MASS SPECTROMETRY [LARGE SCALE ANALYSIS]</scope>
    <source>
        <strain>ADR376</strain>
    </source>
</reference>
<sequence>MKKELKILIIANIALLISIIHYTFDLLTLCIDDTSKDALTDEQLNPPNGFNSTFYESPPQLIPKIIHQTYKTNDIPEQWVKGRQKCIDLHPDYTYILWTDEMSDTFIKQEYPWFLDTFRSYEYPIERADAIRYFILSHYGGIYIDLDDGCERRLDPLLKVPAFLRKTSPTGVSNDVMGSVPRHPFFLKVIKSLKHYKKNWYIPYMTIMGSTGPLFISVVWKQYKRWSNTAENGAVRILQPADYKMHNNSFFSISKGSSWHTGDANFMKTLENHILSCVVTGFIFGFFILYGEFTFYTWLCSGPFNNKRYYIQWLSDKFKLHKWKLTSSYKNKEKRRNPTRHEYNSRGKRLRKDSNIPYDSVFLDIEKNHAKFTDLT</sequence>
<protein>
    <recommendedName>
        <fullName evidence="6">Mannosyl phosphorylinositol ceramide synthase CSH1</fullName>
        <ecNumber evidence="3">2.4.1.370</ecNumber>
    </recommendedName>
    <alternativeName>
        <fullName evidence="6">CSG1/SUR1 homolog 1</fullName>
    </alternativeName>
</protein>
<proteinExistence type="evidence at protein level"/>
<gene>
    <name evidence="6" type="primary">CSH1</name>
    <name type="ordered locus">YBR161W</name>
    <name type="ORF">YBR1212</name>
</gene>
<name>CSH1_YEAST</name>
<keyword id="KW-0472">Membrane</keyword>
<keyword id="KW-0597">Phosphoprotein</keyword>
<keyword id="KW-1185">Reference proteome</keyword>
<keyword id="KW-0808">Transferase</keyword>
<keyword id="KW-0812">Transmembrane</keyword>
<keyword id="KW-1133">Transmembrane helix</keyword>
<keyword id="KW-0926">Vacuole</keyword>
<organism>
    <name type="scientific">Saccharomyces cerevisiae (strain ATCC 204508 / S288c)</name>
    <name type="common">Baker's yeast</name>
    <dbReference type="NCBI Taxonomy" id="559292"/>
    <lineage>
        <taxon>Eukaryota</taxon>
        <taxon>Fungi</taxon>
        <taxon>Dikarya</taxon>
        <taxon>Ascomycota</taxon>
        <taxon>Saccharomycotina</taxon>
        <taxon>Saccharomycetes</taxon>
        <taxon>Saccharomycetales</taxon>
        <taxon>Saccharomycetaceae</taxon>
        <taxon>Saccharomyces</taxon>
    </lineage>
</organism>
<comment type="function">
    <text evidence="3">Involved in the synthesis of mannosyl phosphorylinositol ceramide (PubMed:12954640). Catalyzes the addition of mannosyl to phosphorylinositol ceramide (PubMed:12954640).</text>
</comment>
<comment type="catalytic activity">
    <reaction evidence="3">
        <text>a 1D-myo-inositol-1-phospho-N-[(R)-2-hydroxy-very-long-chain fatty acyl]-(R)-4-hydroxysphingoid base + GDP-alpha-D-mannose = an alpha-D-mannosyl-(1&lt;-&gt;6)-1D-myo-inositol-1-phospho-N-[(R)-2-hydroxy-very-long-chain fatty acyl]-(R)-4-hydroxysphingoid base + GDP + H(+)</text>
        <dbReference type="Rhea" id="RHEA:64596"/>
        <dbReference type="ChEBI" id="CHEBI:15378"/>
        <dbReference type="ChEBI" id="CHEBI:57527"/>
        <dbReference type="ChEBI" id="CHEBI:58189"/>
        <dbReference type="ChEBI" id="CHEBI:155885"/>
        <dbReference type="ChEBI" id="CHEBI:155926"/>
        <dbReference type="EC" id="2.4.1.370"/>
    </reaction>
    <physiologicalReaction direction="left-to-right" evidence="3">
        <dbReference type="Rhea" id="RHEA:64597"/>
    </physiologicalReaction>
</comment>
<comment type="subunit">
    <text evidence="3">Heterodimer of CSH1 and CSG2.</text>
</comment>
<comment type="interaction">
    <interactant intactId="EBI-20861">
        <id>P38287</id>
    </interactant>
    <interactant intactId="EBI-2051140">
        <id>P35206</id>
        <label>CSG2</label>
    </interactant>
    <organismsDiffer>false</organismsDiffer>
    <experiments>2</experiments>
</comment>
<comment type="subcellular location">
    <subcellularLocation>
        <location evidence="4">Vacuole membrane</location>
        <topology evidence="4">Multi-pass membrane protein</topology>
    </subcellularLocation>
</comment>
<comment type="disruption phenotype">
    <text evidence="3">Exhibits a reduction in the synthesis of mannosylated sphingolipids.</text>
</comment>
<comment type="miscellaneous">
    <text evidence="5">Present with 195 molecules/cell in log phase SD medium.</text>
</comment>
<comment type="similarity">
    <text evidence="7">Belongs to the glycosyltransferase 32 family.</text>
</comment>
<feature type="chain" id="PRO_0000079395" description="Mannosyl phosphorylinositol ceramide synthase CSH1">
    <location>
        <begin position="1"/>
        <end position="376"/>
    </location>
</feature>
<feature type="transmembrane region" description="Helical" evidence="1">
    <location>
        <begin position="7"/>
        <end position="27"/>
    </location>
</feature>
<feature type="transmembrane region" description="Helical" evidence="1">
    <location>
        <begin position="274"/>
        <end position="294"/>
    </location>
</feature>
<feature type="region of interest" description="Disordered" evidence="2">
    <location>
        <begin position="331"/>
        <end position="351"/>
    </location>
</feature>
<feature type="modified residue" description="Phosphoserine" evidence="8">
    <location>
        <position position="354"/>
    </location>
</feature>
<accession>P38287</accession>
<accession>D6VQF6</accession>
<dbReference type="EC" id="2.4.1.370" evidence="3"/>
<dbReference type="EMBL" id="X80224">
    <property type="protein sequence ID" value="CAA56510.1"/>
    <property type="molecule type" value="Genomic_DNA"/>
</dbReference>
<dbReference type="EMBL" id="Z36030">
    <property type="protein sequence ID" value="CAA85120.1"/>
    <property type="molecule type" value="Genomic_DNA"/>
</dbReference>
<dbReference type="EMBL" id="AY692764">
    <property type="protein sequence ID" value="AAT92783.1"/>
    <property type="molecule type" value="Genomic_DNA"/>
</dbReference>
<dbReference type="EMBL" id="BK006936">
    <property type="protein sequence ID" value="DAA07276.1"/>
    <property type="molecule type" value="Genomic_DNA"/>
</dbReference>
<dbReference type="PIR" id="S46032">
    <property type="entry name" value="S46032"/>
</dbReference>
<dbReference type="RefSeq" id="NP_009719.3">
    <property type="nucleotide sequence ID" value="NM_001178509.3"/>
</dbReference>
<dbReference type="SMR" id="P38287"/>
<dbReference type="BioGRID" id="32860">
    <property type="interactions" value="206"/>
</dbReference>
<dbReference type="ComplexPortal" id="CPX-1740">
    <property type="entry name" value="Mannosyl phosphorylinositol ceramide synthase CSH1-CSG2"/>
</dbReference>
<dbReference type="DIP" id="DIP-5144N"/>
<dbReference type="FunCoup" id="P38287">
    <property type="interactions" value="69"/>
</dbReference>
<dbReference type="IntAct" id="P38287">
    <property type="interactions" value="3"/>
</dbReference>
<dbReference type="MINT" id="P38287"/>
<dbReference type="STRING" id="4932.YBR161W"/>
<dbReference type="CAZy" id="GT32">
    <property type="family name" value="Glycosyltransferase Family 32"/>
</dbReference>
<dbReference type="iPTMnet" id="P38287"/>
<dbReference type="PaxDb" id="4932-YBR161W"/>
<dbReference type="PeptideAtlas" id="P38287"/>
<dbReference type="EnsemblFungi" id="YBR161W_mRNA">
    <property type="protein sequence ID" value="YBR161W"/>
    <property type="gene ID" value="YBR161W"/>
</dbReference>
<dbReference type="GeneID" id="852458"/>
<dbReference type="KEGG" id="sce:YBR161W"/>
<dbReference type="AGR" id="SGD:S000000365"/>
<dbReference type="SGD" id="S000000365">
    <property type="gene designation" value="CSH1"/>
</dbReference>
<dbReference type="VEuPathDB" id="FungiDB:YBR161W"/>
<dbReference type="eggNOG" id="ENOG502QS3D">
    <property type="taxonomic scope" value="Eukaryota"/>
</dbReference>
<dbReference type="GeneTree" id="ENSGT00940000176781"/>
<dbReference type="HOGENOM" id="CLU_036369_3_2_1"/>
<dbReference type="InParanoid" id="P38287"/>
<dbReference type="OMA" id="EYLFYSW"/>
<dbReference type="OrthoDB" id="3647at2759"/>
<dbReference type="BioCyc" id="MetaCyc:G3O-29111-MONOMER"/>
<dbReference type="BioCyc" id="YEAST:G3O-29111-MONOMER"/>
<dbReference type="BRENDA" id="2.4.1.370">
    <property type="organism ID" value="984"/>
</dbReference>
<dbReference type="BioGRID-ORCS" id="852458">
    <property type="hits" value="0 hits in 10 CRISPR screens"/>
</dbReference>
<dbReference type="PRO" id="PR:P38287"/>
<dbReference type="Proteomes" id="UP000002311">
    <property type="component" value="Chromosome II"/>
</dbReference>
<dbReference type="RNAct" id="P38287">
    <property type="molecule type" value="protein"/>
</dbReference>
<dbReference type="GO" id="GO:0000324">
    <property type="term" value="C:fungal-type vacuole"/>
    <property type="evidence" value="ECO:0007005"/>
    <property type="project" value="SGD"/>
</dbReference>
<dbReference type="GO" id="GO:0005794">
    <property type="term" value="C:Golgi apparatus"/>
    <property type="evidence" value="ECO:0000314"/>
    <property type="project" value="ComplexPortal"/>
</dbReference>
<dbReference type="GO" id="GO:0031501">
    <property type="term" value="C:mannosyltransferase complex"/>
    <property type="evidence" value="ECO:0000353"/>
    <property type="project" value="ComplexPortal"/>
</dbReference>
<dbReference type="GO" id="GO:0005774">
    <property type="term" value="C:vacuolar membrane"/>
    <property type="evidence" value="ECO:0007669"/>
    <property type="project" value="UniProtKB-SubCell"/>
</dbReference>
<dbReference type="GO" id="GO:0103064">
    <property type="term" value="F:inositol phosphorylceramide mannosyltransferase activity"/>
    <property type="evidence" value="ECO:0000315"/>
    <property type="project" value="SGD"/>
</dbReference>
<dbReference type="GO" id="GO:0000030">
    <property type="term" value="F:mannosyltransferase activity"/>
    <property type="evidence" value="ECO:0000318"/>
    <property type="project" value="GO_Central"/>
</dbReference>
<dbReference type="GO" id="GO:0006688">
    <property type="term" value="P:glycosphingolipid biosynthetic process"/>
    <property type="evidence" value="ECO:0000315"/>
    <property type="project" value="SGD"/>
</dbReference>
<dbReference type="GO" id="GO:0006676">
    <property type="term" value="P:mannosyl diphosphorylinositol ceramide metabolic process"/>
    <property type="evidence" value="ECO:0000314"/>
    <property type="project" value="ComplexPortal"/>
</dbReference>
<dbReference type="GO" id="GO:0051999">
    <property type="term" value="P:mannosyl-inositol phosphorylceramide biosynthetic process"/>
    <property type="evidence" value="ECO:0000318"/>
    <property type="project" value="GO_Central"/>
</dbReference>
<dbReference type="GO" id="GO:0030148">
    <property type="term" value="P:sphingolipid biosynthetic process"/>
    <property type="evidence" value="ECO:0000315"/>
    <property type="project" value="SGD"/>
</dbReference>
<dbReference type="FunFam" id="3.90.550.20:FF:000001">
    <property type="entry name" value="MIPC synthase subunit (SurA)"/>
    <property type="match status" value="1"/>
</dbReference>
<dbReference type="Gene3D" id="3.90.550.20">
    <property type="match status" value="1"/>
</dbReference>
<dbReference type="InterPro" id="IPR051706">
    <property type="entry name" value="Glycosyltransferase_domain"/>
</dbReference>
<dbReference type="InterPro" id="IPR007577">
    <property type="entry name" value="GlycoTrfase_DXD_sugar-bd_CS"/>
</dbReference>
<dbReference type="InterPro" id="IPR029044">
    <property type="entry name" value="Nucleotide-diphossugar_trans"/>
</dbReference>
<dbReference type="PANTHER" id="PTHR32385">
    <property type="entry name" value="MANNOSYL PHOSPHORYLINOSITOL CERAMIDE SYNTHASE"/>
    <property type="match status" value="1"/>
</dbReference>
<dbReference type="PANTHER" id="PTHR32385:SF20">
    <property type="entry name" value="MANNOSYL PHOSPHORYLINOSITOL CERAMIDE SYNTHASE CSH1-RELATED"/>
    <property type="match status" value="1"/>
</dbReference>
<dbReference type="Pfam" id="PF04488">
    <property type="entry name" value="Gly_transf_sug"/>
    <property type="match status" value="1"/>
</dbReference>
<dbReference type="SUPFAM" id="SSF53448">
    <property type="entry name" value="Nucleotide-diphospho-sugar transferases"/>
    <property type="match status" value="1"/>
</dbReference>